<evidence type="ECO:0000250" key="1">
    <source>
        <dbReference type="UniProtKB" id="Q03131"/>
    </source>
</evidence>
<evidence type="ECO:0000250" key="2">
    <source>
        <dbReference type="UniProtKB" id="Q03133"/>
    </source>
</evidence>
<evidence type="ECO:0000255" key="3"/>
<evidence type="ECO:0000255" key="4">
    <source>
        <dbReference type="PROSITE-ProRule" id="PRU00258"/>
    </source>
</evidence>
<evidence type="ECO:0000255" key="5">
    <source>
        <dbReference type="PROSITE-ProRule" id="PRU01348"/>
    </source>
</evidence>
<evidence type="ECO:0000255" key="6">
    <source>
        <dbReference type="PROSITE-ProRule" id="PRU01363"/>
    </source>
</evidence>
<evidence type="ECO:0000269" key="7">
    <source>
    </source>
</evidence>
<evidence type="ECO:0000269" key="8">
    <source>
    </source>
</evidence>
<evidence type="ECO:0000269" key="9">
    <source>
    </source>
</evidence>
<evidence type="ECO:0000303" key="10">
    <source>
    </source>
</evidence>
<evidence type="ECO:0000305" key="11"/>
<evidence type="ECO:0000305" key="12">
    <source>
    </source>
</evidence>
<evidence type="ECO:0000312" key="13">
    <source>
        <dbReference type="EMBL" id="CCP44821.1"/>
    </source>
</evidence>
<keyword id="KW-0012">Acyltransferase</keyword>
<keyword id="KW-0175">Coiled coil</keyword>
<keyword id="KW-0276">Fatty acid metabolism</keyword>
<keyword id="KW-0443">Lipid metabolism</keyword>
<keyword id="KW-0511">Multifunctional enzyme</keyword>
<keyword id="KW-0596">Phosphopantetheine</keyword>
<keyword id="KW-0597">Phosphoprotein</keyword>
<keyword id="KW-1185">Reference proteome</keyword>
<keyword id="KW-0677">Repeat</keyword>
<keyword id="KW-0808">Transferase</keyword>
<gene>
    <name evidence="13" type="primary">pks12</name>
    <name evidence="10" type="synonym">msl6</name>
    <name evidence="13" type="ordered locus">Rv2048c</name>
</gene>
<feature type="chain" id="PRO_0000451583" description="Mycoketide-CoA synthase">
    <location>
        <begin position="1"/>
        <end position="4151"/>
    </location>
</feature>
<feature type="domain" description="Ketosynthase family 3 (KS3) 1" evidence="5">
    <location>
        <begin position="34"/>
        <end position="457"/>
    </location>
</feature>
<feature type="domain" description="PKS/mFAS DH 1" evidence="6">
    <location>
        <begin position="926"/>
        <end position="1195"/>
    </location>
</feature>
<feature type="domain" description="Carrier 1" evidence="4">
    <location>
        <begin position="1963"/>
        <end position="2038"/>
    </location>
</feature>
<feature type="domain" description="Ketosynthase family 3 (KS3) 2" evidence="5">
    <location>
        <begin position="2056"/>
        <end position="2480"/>
    </location>
</feature>
<feature type="domain" description="PKS/mFAS DH 2" evidence="6">
    <location>
        <begin position="2940"/>
        <end position="3215"/>
    </location>
</feature>
<feature type="domain" description="Carrier 2" evidence="4">
    <location>
        <begin position="3995"/>
        <end position="4070"/>
    </location>
</feature>
<feature type="region of interest" description="Module 1" evidence="11">
    <location>
        <begin position="35"/>
        <end position="2038"/>
    </location>
</feature>
<feature type="region of interest" description="Acyltransferase 1" evidence="11">
    <location>
        <begin position="559"/>
        <end position="880"/>
    </location>
</feature>
<feature type="region of interest" description="Dehydratase 1" evidence="11">
    <location>
        <begin position="926"/>
        <end position="1194"/>
    </location>
</feature>
<feature type="region of interest" description="N-terminal hotdog fold 1" evidence="6">
    <location>
        <begin position="926"/>
        <end position="1048"/>
    </location>
</feature>
<feature type="region of interest" description="C-terminal hotdog fold 1" evidence="6">
    <location>
        <begin position="1060"/>
        <end position="1195"/>
    </location>
</feature>
<feature type="region of interest" description="Enoyl reductase 1" evidence="11">
    <location>
        <begin position="1366"/>
        <end position="1671"/>
    </location>
</feature>
<feature type="region of interest" description="Beta-ketoacyl reductase 1" evidence="11">
    <location>
        <begin position="1680"/>
        <end position="1858"/>
    </location>
</feature>
<feature type="region of interest" description="Module 2" evidence="11">
    <location>
        <begin position="2057"/>
        <end position="4070"/>
    </location>
</feature>
<feature type="region of interest" description="Acyltransferase 2" evidence="11">
    <location>
        <begin position="2582"/>
        <end position="2893"/>
    </location>
</feature>
<feature type="region of interest" description="Dehydratase 2" evidence="11">
    <location>
        <begin position="2940"/>
        <end position="3215"/>
    </location>
</feature>
<feature type="region of interest" description="N-terminal hotdog fold 2" evidence="6">
    <location>
        <begin position="2940"/>
        <end position="3062"/>
    </location>
</feature>
<feature type="region of interest" description="C-terminal hotdog fold 2" evidence="6">
    <location>
        <begin position="3074"/>
        <end position="3215"/>
    </location>
</feature>
<feature type="region of interest" description="Enoyl reductase 2" evidence="11">
    <location>
        <begin position="3395"/>
        <end position="3701"/>
    </location>
</feature>
<feature type="region of interest" description="Beta-ketoacyl reductase 2" evidence="11">
    <location>
        <begin position="3710"/>
        <end position="3888"/>
    </location>
</feature>
<feature type="coiled-coil region" evidence="3">
    <location>
        <begin position="2"/>
        <end position="32"/>
    </location>
</feature>
<feature type="active site" description="Acyl-thioester intermediate; for beta-ketoacyl synthase 1 activity" evidence="5">
    <location>
        <position position="203"/>
    </location>
</feature>
<feature type="active site" description="For beta-ketoacyl synthase 1 activity" evidence="5">
    <location>
        <position position="338"/>
    </location>
</feature>
<feature type="active site" description="For beta-ketoacyl synthase 1 activity" evidence="5">
    <location>
        <position position="379"/>
    </location>
</feature>
<feature type="active site" description="Acyl-ester intermediate; for acyltransferase 1 activity" evidence="2">
    <location>
        <position position="650"/>
    </location>
</feature>
<feature type="active site" description="Proton acceptor; for dehydratase activity 1" evidence="6">
    <location>
        <position position="958"/>
    </location>
</feature>
<feature type="active site" description="Proton donor; for dehydratase activity 1" evidence="6">
    <location>
        <position position="1120"/>
    </location>
</feature>
<feature type="active site" description="For beta-ketoacyl reductase 1 activity" evidence="1">
    <location>
        <position position="1828"/>
    </location>
</feature>
<feature type="active site" description="Acyl-thioester intermediate; for beta-ketoacyl synthase 2 activity" evidence="5">
    <location>
        <position position="2226"/>
    </location>
</feature>
<feature type="active site" description="For beta-ketoacyl synthase 2 activity" evidence="5">
    <location>
        <position position="2361"/>
    </location>
</feature>
<feature type="active site" description="For beta-ketoacyl synthase 2 activity" evidence="5">
    <location>
        <position position="2402"/>
    </location>
</feature>
<feature type="active site" description="Acyl-ester intermediate; for acyltransferase 2 activity" evidence="2">
    <location>
        <position position="2672"/>
    </location>
</feature>
<feature type="active site" description="Proton acceptor; for dehydratase activity 2" evidence="6">
    <location>
        <position position="2972"/>
    </location>
</feature>
<feature type="active site" description="Proton donor; for dehydratase activity 2" evidence="6">
    <location>
        <position position="3135"/>
    </location>
</feature>
<feature type="active site" description="For beta-ketoacyl reductase 2 activity" evidence="1">
    <location>
        <position position="3858"/>
    </location>
</feature>
<feature type="modified residue" description="O-(pantetheine 4'-phosphoryl)serine" evidence="4">
    <location>
        <position position="1998"/>
    </location>
</feature>
<feature type="modified residue" description="O-(pantetheine 4'-phosphoryl)serine" evidence="4">
    <location>
        <position position="4030"/>
    </location>
</feature>
<feature type="mutagenesis site" description="Loss of activity." evidence="9">
    <original>C</original>
    <variation>A</variation>
    <location>
        <position position="2226"/>
    </location>
</feature>
<feature type="mutagenesis site" description="Loss of activity." evidence="9">
    <original>S</original>
    <variation>A</variation>
    <location>
        <position position="2672"/>
    </location>
</feature>
<comment type="function">
    <text evidence="8 9">Involved in the synthesis of beta-D-mannosyl phosphomycoketide (MPM), an antigenic mycobacterial polyketide (PubMed:15611286, PubMed:18613748). Binds a fatty acyl-CoA as a starter unit, and extends it by five rounds of alternative additions of malonyl-CoA and methylmalonyl-CoA extender units. Depending on the starter unit, the enzyme forms mycoketide-CoAs of different lengths (PubMed:15611286, PubMed:18613748). Shows preference for small-/medium-chain starter fatty acyl substrates (PubMed:18613748). Uses a hybrid modularly iterative mechanism, by forming a supramolecular assembly to perform repetitive cycles of iterations (PubMed:18613748).</text>
</comment>
<comment type="catalytic activity">
    <reaction evidence="8 9">
        <text>a medium-chain fatty acyl-CoA + 5 (S)-methylmalonyl-CoA + 5 malonyl-CoA + 22 NADPH + 32 H(+) = a mycoketide-CoA + 10 CO2 + 22 NADP(+) + 10 CoA + 11 H2O</text>
        <dbReference type="Rhea" id="RHEA:58028"/>
        <dbReference type="ChEBI" id="CHEBI:15377"/>
        <dbReference type="ChEBI" id="CHEBI:15378"/>
        <dbReference type="ChEBI" id="CHEBI:16526"/>
        <dbReference type="ChEBI" id="CHEBI:57287"/>
        <dbReference type="ChEBI" id="CHEBI:57327"/>
        <dbReference type="ChEBI" id="CHEBI:57384"/>
        <dbReference type="ChEBI" id="CHEBI:57783"/>
        <dbReference type="ChEBI" id="CHEBI:58349"/>
        <dbReference type="ChEBI" id="CHEBI:90546"/>
        <dbReference type="ChEBI" id="CHEBI:142474"/>
        <dbReference type="EC" id="2.3.1.295"/>
    </reaction>
</comment>
<comment type="pathway">
    <text evidence="11">Lipid metabolism; fatty acid metabolism.</text>
</comment>
<comment type="subunit">
    <text evidence="9">Forms a large supramolecular assembly mediated through specific interactions between the N- and C-terminus linkers.</text>
</comment>
<comment type="interaction">
    <interactant intactId="EBI-16359004">
        <id>I6XD69</id>
    </interactant>
    <interactant intactId="EBI-16359004">
        <id>I6XD69</id>
        <label>pks12</label>
    </interactant>
    <organismsDiffer>false</organismsDiffer>
    <experiments>2</experiments>
</comment>
<comment type="domain">
    <text evidence="12">Contains 12 catalytic domains constituting two modules. Both modules contain a complete set of catalytic and auxiliary domains.</text>
</comment>
<comment type="disruption phenotype">
    <text evidence="7 8">Deletion of the gene completely abolishes the ability of the strain to activate CD1c-restricted T cells (PubMed:15611286). Growth of the mutant is attenuated in mouse alveolar macrophage cell line, and the virulence of the mutant in vivo is highly attenuated in a murine model (PubMed:12819062). Sirakova et al. showed that disruption of the gene causes a drastic decrease in the synthesis of dimycocerosyl phthiocerol (DIM), but Matsunaga et al. demonstrated later that DIM is produced by the disruption mutant (PubMed:12819062, PubMed:15611286).</text>
</comment>
<comment type="miscellaneous">
    <text evidence="8">The alkane moiety distinguishes these mycobacterial lipid antigens from mammalian mannosyl beta-1-phosphodolichol (MPD) and is necessary for activation of CD1c-restricted T cells.</text>
</comment>
<sequence>MVDQLQHATEALRKALVQVERLKRTNRALLERSSEPIAIVGMSCRFPGGVDSPEGLWQMVADARDVMSEFPTDRGWDLAGLFDPDPDVRHKSYARTGGFVDGVADFDPAFFGISPSEALAMDPQHRMLLELSWEALERAGIDPTGLRGSATGVFAGLIVGGYGMLAEEIEGYRLTGMTSSVASGRVAYVLGLEGPAVSVDTACSSSLVALHMAVGSLRSGECDLALAGGVTVNATPTVFVEFSRHRGLAPDGRCKPYAGRADGVGWSEGGGMLVLQRLSDARRLGHPVLAVVVGSAVNQDGASNGLTAPNGPSQQRVVRAALANAGLSAAEVDVVEGHGTGTTLGDPIEAQALLATYGQDRGEPGEPLWLGSVKSNMGHTQAAAGVAGVIKMVLAMRHELLPATLHVDVPSPHVDWSAGAVELLTAPRVWPAGARTRRAGVSSFGISGTNAHVIIEAVPVVPRREAGWAGPVVPWVVSAKSESALRGQAARLAAYVRGDDGLDVADVGWSLAGRSVFEHRAVVVGGDRDRLLAGLDELAGDQLGGSVVRGTATAAGKTVFVFPGQGSQWLGMGIELLDTAPAFAQQIDACAEAFAEFVDWSLVDVLRGAPGAPGLDRVDVVQPVLFAVMVSLAELWKSVAVHPDAVIGHSQGEIAAAYVAGALSLRDAARVVTLRSKLLAGLAGPGGMVSIACGADQARDLLAPFGDRVSIAVVNGPSAVVVSGEVGALEELIAVCSTKELRTRRIEVDYASHSVEVEAIRGPLAEALSGIEPRSTRTVFFSTVTGNRLDTAGLDADYWYRNVRQTVLFDQAVRNACEQGYRTFIESSPHPALITGVEETFAACTDGDSEAIVVPTLGRGDGGLHRFLLSAASAFVAGVAVNWRGTLDGAGYVELPTYAFDKRRFWLSAEGSGADVSGLGLGASEHPLLGAVVDLPASGGVVLTGRLSPNVQPWLADHAVSDVVLFPGTGFVELAIRAGDEVGCSVLDELTLAAPLLLPATGSVAVQVVVDAGRDSNSRGVSIFSRADAQAGWLLHAEGILRPGSVEPGADLSVWPPAGAVTVDVADGYERLATRGYRYGPAFRGLTAMWARGEEIFAEVRLPEAAGGVGGFGVHPALLDAVLHAVVIAGDPDELALPFAWQGVSLHATGASAVRARIAPAGPSAVSVELADGLGLPVLSVASMVARPVTERQLLAAVSGSGPDRLFEVIWSPASAATSPGPTPAYQIFESVAADQDPVAGSYVRSHQALAAVQSWLTDHESGVLVVATRGAMALPREDVADLAGAAVWGLVRSAQTEHPGRIVLVDSDAATDDAAIAMALATGEPQVVLRGGQVYTARVRGSRAADAILVPPGDGPWRLGLGSAGTFENLRLEPVPNADAPLGPGQVRVAMRAIAANFRDIMITLGMFTHDALLGGEGAGVVVEVGPGVTEFSVGDSVFGFFPDGSGTLVAGDVRLLLPMPADWSYAEAAAISAVFTTAYYAFIHLADVQPGQRVLIHAGTGGVGMAAVQLARHLGLEVFATASKGKWDTLRAMGFDDDHISDSRSLEFEDKFRAATGGRGFDVVLDSLAGEFVDASLRLVAPGGVFLEMGKTDIRDPGVIAQQYPGVRYRAFDLFEPGRPRMHQYMLELATLFGDGVLRPLPVTTFDVRRAPAALRYLSQARHTGKVVMLMPGSWAAGTVLITGGTGMAGSAVARHVVARHGVRNLVLVSRRGPDAPGAAELVAELAAAGAQVQVVACDAADRAALAKVIADIPVQHPLSGVIHTAGALDDAVVMSLTPDRVDVVLRSKVDAAWHLHELTRDLDVSAFVMFSSMAGLVGSSGQANYAAANSFLDALAAHRRAHGLPAISLGWGLWDQASAMTGGLDAADLARLGREGVLALSTAEALELFDTAMIVDEPFLAPARIDLTALRAHAVAVPPMFSDLASAPTRRQVDDSVAAAKSKSALAHRLHGLPEAEQHAVLLGLVRLHIATVLGNITPEAIDPDKAFQDLGFDSLTAVEMRNRLKSATGLSLSPTLIFDYPTPNRLASYIRTELAGLPQEIKHTPAVRTTSEDPIAIVGMACRYPGGVNSPDDMWDMLIQGRDVLSEFPADRGWDLAGLYNPDPDAAGACYTRTGGFVDGVGDFDPAFFGVGPSEALAMDPQHRMLLELSWEALERAGIDPTGLRGSATGVFAGVMTQGYGMFAAEPVEGFRLTGQLSSVASGRVAYVLGLEGPAVSVDTACSSSLVALHMAVGSLRSGECDLALAGGVTVNATPDIFVEFSRWRGLSPDGRCKAFAAAADGTGFSEGGGMLVLQRLSDARRLGHPVLAVVVGSAVNQDGASNGLTAPNGPSQQRVVRAALANAGLSAAEVDVVEGHGTGTTLGDPIEAQALLATYGQDRGEPGEPLWLGSVKSNMGHTQAAAGVAGVIKMVLAMRHELLPATLHVDVPSPHVDWSAGAVELLTAPRVWPAGARTRRAGVSSFGISGTNAHVIIEAVPVVPRREAGWAGPVVPWVVSAKSESALRGQAARLAAYVRGDDGLDVADVGWSLAGRSVFEHRAVVVGGDRDRLLAGLDELAGDQLGGSVVRGTATAAGKTVFVFPGQGSQWLGMGMGLHAGYPVFAEAFNTVVGELDRHLLRPLREVMWGHDENLLNSTEFAQPALFAVEVALFRLLGSWGVRPDFVMGHSIGELSAAHVAGVLSLENAAVLVAARGRLMQALPAGGAMVAVQAAEEEVRPLLSAEVDIAAVNGPASLVISGAQNAVAAVADQLRADGRRVHQLAVSHAFHSPLMDPMIDEFAAVAAGIAIGRPTIGVISNVTGQLAGDDFGSAAYWRRHIRQAVRFADSVRFAQAAGGSRFLEVGPSGGLVASIEESLPDVAVTTMSALRKDRPEPATLTNAVAQGFVTGMDLDWRAVVGEAQFVELPTYAFQRRRFWLSGDGVAADAAGLGLAASEHALLGAVIDLPASGGVVLTGRLSPSVQGWLADHSVAGVTIFPGAGFVELAIRAGDEVGCGVVDELTLAAPLVLPASGSVAVQVVVNGPDESGVRGVSVYSRGDVGTGWVLHAEGALRAGSAEPTADLAMWPPAGAVPVEVADGYQQLAERGYGYGPAFRGLTAMWRRGDEVFAEVALPADAGVSVTGFGVHPVLLDAALHAVVLSAESAERGQGSVLVPFSWQGVSLHAAGASAVRARIAPVGPSAVSIELADGLGLPVLSVASMLARPVTDQQLRAAVSSSGPDRLFEVTWSPQPSAAVEPLPVCAWGTTEDSAAVVFESVPLAGDVVAGVYAATSSVLDVLQSWLTRDGAGVLVVMTRGAVALPGEDVTDLAGAAVWGLVRSAQTEHPGRIVLVDSDAPLDDSALAAVVTTGEPQVLWRRGEVYTARVHGSRAVGGLLVPPSDRPWRLAMSTAGTFENLRLELIPDADAPLGPGQVRVAVSAIAANFRDVMIALGLYPDPDAVMGVEACGVVIETSLNKGSFAVGDRVMGLFPEGTGTVASTDQRLLVKVPAGWSHTAAATTSVVFATAHYALVDLAAARSGQRVLIHAGTGGVGMAAVQLARHLGLEVFATASKGKWDTLRAMGFDDDHISDSRSLEFEDKFRAATGGRGFDVVLDSLAGEFVDASLRLVAPGGVFLEMGKTDIRDPGVIAQQYPGVRYRAFDLFEPGPDRIAQILAELATLFGDGVLRPLPVTTFDVRCAPAALRYLSQARHTGKVVMLMPGSWAAGTVLITGGTGMAGSAVARHVVARHGVRNLVLVSRRGPDAPGAAELVAELAAAGAQVQVVACDAADRAALAKVIADIPVQHPLSGVIHTAGALDDAVVMSLTPDRVDVVLRSKVDAAWHLHELTRDLDVSAFVMFSSMAGLVGSSGQANYAAANSFLDALAAHRRAHGLPAISLGWGLWDQASAMTGGLATVDFKRFARDGIVAMSSADALQLFDTAMIVDEPFMLPAHIDFAALKVKFDGGTLPPMFVDLINAPTRRQVDDSLAAAKSKSALLQRLEGLPEDEQHAVLLDLVRSHIATVLGSASPEAIDPDRAFQELGFDSLTAVEMRNRLKSATGLALSPTLIFDYPNSAALAGYMRRELLGSSPQDTSAVAAGEAELQRIVASIPVKRLRQAGVLDLLLALANETETSGQDPALAPTAEQEIADMDLDDLVNAAFRNDDE</sequence>
<protein>
    <recommendedName>
        <fullName evidence="11">Mycoketide-CoA synthase</fullName>
        <ecNumber evidence="8 9">2.3.1.295</ecNumber>
    </recommendedName>
    <alternativeName>
        <fullName evidence="11">Polyketide synthase Pks12</fullName>
    </alternativeName>
</protein>
<accession>I6XD69</accession>
<accession>L0TA10</accession>
<name>PKS12_MYCTU</name>
<organism>
    <name type="scientific">Mycobacterium tuberculosis (strain ATCC 25618 / H37Rv)</name>
    <dbReference type="NCBI Taxonomy" id="83332"/>
    <lineage>
        <taxon>Bacteria</taxon>
        <taxon>Bacillati</taxon>
        <taxon>Actinomycetota</taxon>
        <taxon>Actinomycetes</taxon>
        <taxon>Mycobacteriales</taxon>
        <taxon>Mycobacteriaceae</taxon>
        <taxon>Mycobacterium</taxon>
        <taxon>Mycobacterium tuberculosis complex</taxon>
    </lineage>
</organism>
<dbReference type="EC" id="2.3.1.295" evidence="8 9"/>
<dbReference type="EMBL" id="AL123456">
    <property type="protein sequence ID" value="CCP44821.1"/>
    <property type="molecule type" value="Genomic_DNA"/>
</dbReference>
<dbReference type="RefSeq" id="NP_216564.2">
    <property type="nucleotide sequence ID" value="NC_000962.3"/>
</dbReference>
<dbReference type="RefSeq" id="WP_010886138.1">
    <property type="nucleotide sequence ID" value="NC_018143.2"/>
</dbReference>
<dbReference type="SMR" id="I6XD69"/>
<dbReference type="STRING" id="83332.Rv2048c"/>
<dbReference type="PaxDb" id="83332-Rv2048c"/>
<dbReference type="GeneID" id="888350"/>
<dbReference type="KEGG" id="mtu:Rv2048c"/>
<dbReference type="KEGG" id="mtv:RVBD_2048c"/>
<dbReference type="PATRIC" id="fig|83332.111.peg.2283"/>
<dbReference type="TubercuList" id="Rv2048c"/>
<dbReference type="eggNOG" id="COG0604">
    <property type="taxonomic scope" value="Bacteria"/>
</dbReference>
<dbReference type="eggNOG" id="COG3321">
    <property type="taxonomic scope" value="Bacteria"/>
</dbReference>
<dbReference type="InParanoid" id="I6XD69"/>
<dbReference type="OrthoDB" id="9778690at2"/>
<dbReference type="BioCyc" id="MetaCyc:G185E-6251-MONOMER"/>
<dbReference type="UniPathway" id="UPA00199"/>
<dbReference type="Proteomes" id="UP000001584">
    <property type="component" value="Chromosome"/>
</dbReference>
<dbReference type="GO" id="GO:0004315">
    <property type="term" value="F:3-oxoacyl-[acyl-carrier-protein] synthase activity"/>
    <property type="evidence" value="ECO:0007669"/>
    <property type="project" value="InterPro"/>
</dbReference>
<dbReference type="GO" id="GO:0004312">
    <property type="term" value="F:fatty acid synthase activity"/>
    <property type="evidence" value="ECO:0000318"/>
    <property type="project" value="GO_Central"/>
</dbReference>
<dbReference type="GO" id="GO:0042802">
    <property type="term" value="F:identical protein binding"/>
    <property type="evidence" value="ECO:0000353"/>
    <property type="project" value="IntAct"/>
</dbReference>
<dbReference type="GO" id="GO:0016491">
    <property type="term" value="F:oxidoreductase activity"/>
    <property type="evidence" value="ECO:0007669"/>
    <property type="project" value="InterPro"/>
</dbReference>
<dbReference type="GO" id="GO:0031177">
    <property type="term" value="F:phosphopantetheine binding"/>
    <property type="evidence" value="ECO:0007669"/>
    <property type="project" value="InterPro"/>
</dbReference>
<dbReference type="GO" id="GO:0006633">
    <property type="term" value="P:fatty acid biosynthetic process"/>
    <property type="evidence" value="ECO:0000318"/>
    <property type="project" value="GO_Central"/>
</dbReference>
<dbReference type="CDD" id="cd05195">
    <property type="entry name" value="enoyl_red"/>
    <property type="match status" value="2"/>
</dbReference>
<dbReference type="CDD" id="cd08956">
    <property type="entry name" value="KR_3_FAS_SDR_x"/>
    <property type="match status" value="2"/>
</dbReference>
<dbReference type="CDD" id="cd00833">
    <property type="entry name" value="PKS"/>
    <property type="match status" value="2"/>
</dbReference>
<dbReference type="FunFam" id="3.40.50.720:FF:000209">
    <property type="entry name" value="Polyketide synthase Pks12"/>
    <property type="match status" value="2"/>
</dbReference>
<dbReference type="FunFam" id="3.40.50.720:FF:000785">
    <property type="entry name" value="Polyketide synthase Pks12"/>
    <property type="match status" value="2"/>
</dbReference>
<dbReference type="FunFam" id="3.40.47.10:FF:000019">
    <property type="entry name" value="Polyketide synthase type I"/>
    <property type="match status" value="2"/>
</dbReference>
<dbReference type="FunFam" id="3.40.366.10:FF:000002">
    <property type="entry name" value="Probable polyketide synthase 2"/>
    <property type="match status" value="2"/>
</dbReference>
<dbReference type="FunFam" id="3.10.129.110:FF:000003">
    <property type="entry name" value="Probable polyketide synthase pks1"/>
    <property type="match status" value="2"/>
</dbReference>
<dbReference type="FunFam" id="3.90.180.10:FF:000032">
    <property type="entry name" value="Probable polyketide synthase pks1"/>
    <property type="match status" value="2"/>
</dbReference>
<dbReference type="FunFam" id="1.10.1200.10:FF:000007">
    <property type="entry name" value="Probable polyketide synthase pks17"/>
    <property type="match status" value="2"/>
</dbReference>
<dbReference type="FunFam" id="3.40.50.720:FF:000381">
    <property type="entry name" value="Probable polyketide synthase pks17"/>
    <property type="match status" value="2"/>
</dbReference>
<dbReference type="Gene3D" id="3.30.70.3290">
    <property type="match status" value="2"/>
</dbReference>
<dbReference type="Gene3D" id="3.40.47.10">
    <property type="match status" value="2"/>
</dbReference>
<dbReference type="Gene3D" id="1.10.1200.10">
    <property type="entry name" value="ACP-like"/>
    <property type="match status" value="2"/>
</dbReference>
<dbReference type="Gene3D" id="3.40.366.10">
    <property type="entry name" value="Malonyl-Coenzyme A Acyl Carrier Protein, domain 2"/>
    <property type="match status" value="2"/>
</dbReference>
<dbReference type="Gene3D" id="3.90.180.10">
    <property type="entry name" value="Medium-chain alcohol dehydrogenases, catalytic domain"/>
    <property type="match status" value="2"/>
</dbReference>
<dbReference type="Gene3D" id="3.40.50.720">
    <property type="entry name" value="NAD(P)-binding Rossmann-like Domain"/>
    <property type="match status" value="6"/>
</dbReference>
<dbReference type="Gene3D" id="3.10.129.110">
    <property type="entry name" value="Polyketide synthase dehydratase"/>
    <property type="match status" value="2"/>
</dbReference>
<dbReference type="InterPro" id="IPR001227">
    <property type="entry name" value="Ac_transferase_dom_sf"/>
</dbReference>
<dbReference type="InterPro" id="IPR036736">
    <property type="entry name" value="ACP-like_sf"/>
</dbReference>
<dbReference type="InterPro" id="IPR014043">
    <property type="entry name" value="Acyl_transferase_dom"/>
</dbReference>
<dbReference type="InterPro" id="IPR016035">
    <property type="entry name" value="Acyl_Trfase/lysoPLipase"/>
</dbReference>
<dbReference type="InterPro" id="IPR013154">
    <property type="entry name" value="ADH-like_N"/>
</dbReference>
<dbReference type="InterPro" id="IPR011032">
    <property type="entry name" value="GroES-like_sf"/>
</dbReference>
<dbReference type="InterPro" id="IPR018201">
    <property type="entry name" value="Ketoacyl_synth_AS"/>
</dbReference>
<dbReference type="InterPro" id="IPR014031">
    <property type="entry name" value="Ketoacyl_synth_C"/>
</dbReference>
<dbReference type="InterPro" id="IPR014030">
    <property type="entry name" value="Ketoacyl_synth_N"/>
</dbReference>
<dbReference type="InterPro" id="IPR016036">
    <property type="entry name" value="Malonyl_transacylase_ACP-bd"/>
</dbReference>
<dbReference type="InterPro" id="IPR036291">
    <property type="entry name" value="NAD(P)-bd_dom_sf"/>
</dbReference>
<dbReference type="InterPro" id="IPR032821">
    <property type="entry name" value="PKS_assoc"/>
</dbReference>
<dbReference type="InterPro" id="IPR020841">
    <property type="entry name" value="PKS_Beta-ketoAc_synthase_dom"/>
</dbReference>
<dbReference type="InterPro" id="IPR042104">
    <property type="entry name" value="PKS_dehydratase_sf"/>
</dbReference>
<dbReference type="InterPro" id="IPR020807">
    <property type="entry name" value="PKS_DH"/>
</dbReference>
<dbReference type="InterPro" id="IPR049551">
    <property type="entry name" value="PKS_DH_C"/>
</dbReference>
<dbReference type="InterPro" id="IPR049552">
    <property type="entry name" value="PKS_DH_N"/>
</dbReference>
<dbReference type="InterPro" id="IPR020843">
    <property type="entry name" value="PKS_ER"/>
</dbReference>
<dbReference type="InterPro" id="IPR013968">
    <property type="entry name" value="PKS_KR"/>
</dbReference>
<dbReference type="InterPro" id="IPR049900">
    <property type="entry name" value="PKS_mFAS_DH"/>
</dbReference>
<dbReference type="InterPro" id="IPR050091">
    <property type="entry name" value="PKS_NRPS_Biosynth_Enz"/>
</dbReference>
<dbReference type="InterPro" id="IPR020806">
    <property type="entry name" value="PKS_PP-bd"/>
</dbReference>
<dbReference type="InterPro" id="IPR009081">
    <property type="entry name" value="PP-bd_ACP"/>
</dbReference>
<dbReference type="InterPro" id="IPR006162">
    <property type="entry name" value="Ppantetheine_attach_site"/>
</dbReference>
<dbReference type="InterPro" id="IPR055123">
    <property type="entry name" value="SpnB-like_Rossmann"/>
</dbReference>
<dbReference type="InterPro" id="IPR016039">
    <property type="entry name" value="Thiolase-like"/>
</dbReference>
<dbReference type="PANTHER" id="PTHR43775">
    <property type="entry name" value="FATTY ACID SYNTHASE"/>
    <property type="match status" value="1"/>
</dbReference>
<dbReference type="PANTHER" id="PTHR43775:SF51">
    <property type="entry name" value="INACTIVE PHENOLPHTHIOCEROL SYNTHESIS POLYKETIDE SYNTHASE TYPE I PKS1-RELATED"/>
    <property type="match status" value="1"/>
</dbReference>
<dbReference type="Pfam" id="PF00698">
    <property type="entry name" value="Acyl_transf_1"/>
    <property type="match status" value="2"/>
</dbReference>
<dbReference type="Pfam" id="PF08240">
    <property type="entry name" value="ADH_N"/>
    <property type="match status" value="2"/>
</dbReference>
<dbReference type="Pfam" id="PF13602">
    <property type="entry name" value="ADH_zinc_N_2"/>
    <property type="match status" value="2"/>
</dbReference>
<dbReference type="Pfam" id="PF16197">
    <property type="entry name" value="KAsynt_C_assoc"/>
    <property type="match status" value="2"/>
</dbReference>
<dbReference type="Pfam" id="PF00109">
    <property type="entry name" value="ketoacyl-synt"/>
    <property type="match status" value="2"/>
</dbReference>
<dbReference type="Pfam" id="PF02801">
    <property type="entry name" value="Ketoacyl-synt_C"/>
    <property type="match status" value="2"/>
</dbReference>
<dbReference type="Pfam" id="PF08659">
    <property type="entry name" value="KR"/>
    <property type="match status" value="2"/>
</dbReference>
<dbReference type="Pfam" id="PF21089">
    <property type="entry name" value="PKS_DH_N"/>
    <property type="match status" value="2"/>
</dbReference>
<dbReference type="Pfam" id="PF00550">
    <property type="entry name" value="PP-binding"/>
    <property type="match status" value="2"/>
</dbReference>
<dbReference type="Pfam" id="PF14765">
    <property type="entry name" value="PS-DH"/>
    <property type="match status" value="2"/>
</dbReference>
<dbReference type="Pfam" id="PF22953">
    <property type="entry name" value="SpnB_Rossmann"/>
    <property type="match status" value="2"/>
</dbReference>
<dbReference type="SMART" id="SM00827">
    <property type="entry name" value="PKS_AT"/>
    <property type="match status" value="2"/>
</dbReference>
<dbReference type="SMART" id="SM00826">
    <property type="entry name" value="PKS_DH"/>
    <property type="match status" value="2"/>
</dbReference>
<dbReference type="SMART" id="SM00829">
    <property type="entry name" value="PKS_ER"/>
    <property type="match status" value="2"/>
</dbReference>
<dbReference type="SMART" id="SM00822">
    <property type="entry name" value="PKS_KR"/>
    <property type="match status" value="2"/>
</dbReference>
<dbReference type="SMART" id="SM00825">
    <property type="entry name" value="PKS_KS"/>
    <property type="match status" value="2"/>
</dbReference>
<dbReference type="SMART" id="SM00823">
    <property type="entry name" value="PKS_PP"/>
    <property type="match status" value="2"/>
</dbReference>
<dbReference type="SMART" id="SM01294">
    <property type="entry name" value="PKS_PP_betabranch"/>
    <property type="match status" value="2"/>
</dbReference>
<dbReference type="SUPFAM" id="SSF47336">
    <property type="entry name" value="ACP-like"/>
    <property type="match status" value="2"/>
</dbReference>
<dbReference type="SUPFAM" id="SSF52151">
    <property type="entry name" value="FabD/lysophospholipase-like"/>
    <property type="match status" value="2"/>
</dbReference>
<dbReference type="SUPFAM" id="SSF50129">
    <property type="entry name" value="GroES-like"/>
    <property type="match status" value="2"/>
</dbReference>
<dbReference type="SUPFAM" id="SSF51735">
    <property type="entry name" value="NAD(P)-binding Rossmann-fold domains"/>
    <property type="match status" value="6"/>
</dbReference>
<dbReference type="SUPFAM" id="SSF55048">
    <property type="entry name" value="Probable ACP-binding domain of malonyl-CoA ACP transacylase"/>
    <property type="match status" value="2"/>
</dbReference>
<dbReference type="SUPFAM" id="SSF53901">
    <property type="entry name" value="Thiolase-like"/>
    <property type="match status" value="2"/>
</dbReference>
<dbReference type="PROSITE" id="PS50075">
    <property type="entry name" value="CARRIER"/>
    <property type="match status" value="2"/>
</dbReference>
<dbReference type="PROSITE" id="PS00606">
    <property type="entry name" value="KS3_1"/>
    <property type="match status" value="2"/>
</dbReference>
<dbReference type="PROSITE" id="PS52004">
    <property type="entry name" value="KS3_2"/>
    <property type="match status" value="2"/>
</dbReference>
<dbReference type="PROSITE" id="PS00012">
    <property type="entry name" value="PHOSPHOPANTETHEINE"/>
    <property type="match status" value="2"/>
</dbReference>
<dbReference type="PROSITE" id="PS52019">
    <property type="entry name" value="PKS_MFAS_DH"/>
    <property type="match status" value="2"/>
</dbReference>
<proteinExistence type="evidence at protein level"/>
<reference key="1">
    <citation type="journal article" date="1998" name="Nature">
        <title>Deciphering the biology of Mycobacterium tuberculosis from the complete genome sequence.</title>
        <authorList>
            <person name="Cole S.T."/>
            <person name="Brosch R."/>
            <person name="Parkhill J."/>
            <person name="Garnier T."/>
            <person name="Churcher C.M."/>
            <person name="Harris D.E."/>
            <person name="Gordon S.V."/>
            <person name="Eiglmeier K."/>
            <person name="Gas S."/>
            <person name="Barry C.E. III"/>
            <person name="Tekaia F."/>
            <person name="Badcock K."/>
            <person name="Basham D."/>
            <person name="Brown D."/>
            <person name="Chillingworth T."/>
            <person name="Connor R."/>
            <person name="Davies R.M."/>
            <person name="Devlin K."/>
            <person name="Feltwell T."/>
            <person name="Gentles S."/>
            <person name="Hamlin N."/>
            <person name="Holroyd S."/>
            <person name="Hornsby T."/>
            <person name="Jagels K."/>
            <person name="Krogh A."/>
            <person name="McLean J."/>
            <person name="Moule S."/>
            <person name="Murphy L.D."/>
            <person name="Oliver S."/>
            <person name="Osborne J."/>
            <person name="Quail M.A."/>
            <person name="Rajandream M.A."/>
            <person name="Rogers J."/>
            <person name="Rutter S."/>
            <person name="Seeger K."/>
            <person name="Skelton S."/>
            <person name="Squares S."/>
            <person name="Squares R."/>
            <person name="Sulston J.E."/>
            <person name="Taylor K."/>
            <person name="Whitehead S."/>
            <person name="Barrell B.G."/>
        </authorList>
    </citation>
    <scope>NUCLEOTIDE SEQUENCE [LARGE SCALE GENOMIC DNA]</scope>
    <source>
        <strain>ATCC 25618 / H37Rv</strain>
    </source>
</reference>
<reference key="2">
    <citation type="journal article" date="2003" name="Infect. Immun.">
        <title>The largest open reading frame (pks12) in the Mycobacterium tuberculosis genome is involved in pathogenesis and dimycocerosyl phthiocerol synthesis.</title>
        <authorList>
            <person name="Sirakova T.D."/>
            <person name="Dubey V.S."/>
            <person name="Kim H.J."/>
            <person name="Cynamon M.H."/>
            <person name="Kolattukudy P.E."/>
        </authorList>
    </citation>
    <scope>DISRUPTION PHENOTYPE</scope>
    <source>
        <strain>H37Rv</strain>
    </source>
</reference>
<reference key="3">
    <citation type="journal article" date="2004" name="J. Exp. Med.">
        <title>Mycobacterium tuberculosis pks12 produces a novel polyketide presented by CD1c to T cells.</title>
        <authorList>
            <person name="Matsunaga I."/>
            <person name="Bhatt A."/>
            <person name="Young D.C."/>
            <person name="Cheng T.Y."/>
            <person name="Eyles S.J."/>
            <person name="Besra G.S."/>
            <person name="Briken V."/>
            <person name="Porcelli S.A."/>
            <person name="Costello C.E."/>
            <person name="Jacobs W.R. Jr."/>
            <person name="Moody D.B."/>
        </authorList>
    </citation>
    <scope>FUNCTION</scope>
    <scope>CATALYTIC ACTIVITY</scope>
    <scope>DISRUPTION PHENOTYPE</scope>
</reference>
<reference key="4">
    <citation type="journal article" date="2008" name="PLoS Biol.">
        <title>Novel intermolecular iterative mechanism for biosynthesis of mycoketide catalyzed by a bimodular polyketide synthase.</title>
        <authorList>
            <person name="Chopra T."/>
            <person name="Banerjee S."/>
            <person name="Gupta S."/>
            <person name="Yadav G."/>
            <person name="Anand S."/>
            <person name="Surolia A."/>
            <person name="Roy R.P."/>
            <person name="Mohanty D."/>
            <person name="Gokhale R.S."/>
        </authorList>
    </citation>
    <scope>FUNCTION</scope>
    <scope>CATALYTIC ACTIVITY</scope>
    <scope>REACTION MECHANISM</scope>
    <scope>SUBUNIT</scope>
    <scope>DOMAIN</scope>
    <scope>MUTAGENESIS OF CYS-2226 AND SER-2672</scope>
</reference>
<reference key="5">
    <citation type="journal article" date="2011" name="Mol. Cell. Proteomics">
        <title>Proteogenomic analysis of Mycobacterium tuberculosis by high resolution mass spectrometry.</title>
        <authorList>
            <person name="Kelkar D.S."/>
            <person name="Kumar D."/>
            <person name="Kumar P."/>
            <person name="Balakrishnan L."/>
            <person name="Muthusamy B."/>
            <person name="Yadav A.K."/>
            <person name="Shrivastava P."/>
            <person name="Marimuthu A."/>
            <person name="Anand S."/>
            <person name="Sundaram H."/>
            <person name="Kingsbury R."/>
            <person name="Harsha H.C."/>
            <person name="Nair B."/>
            <person name="Prasad T.S."/>
            <person name="Chauhan D.S."/>
            <person name="Katoch K."/>
            <person name="Katoch V.M."/>
            <person name="Kumar P."/>
            <person name="Chaerkady R."/>
            <person name="Ramachandran S."/>
            <person name="Dash D."/>
            <person name="Pandey A."/>
        </authorList>
    </citation>
    <scope>IDENTIFICATION BY MASS SPECTROMETRY [LARGE SCALE ANALYSIS]</scope>
    <source>
        <strain>ATCC 25618 / H37Rv</strain>
    </source>
</reference>